<evidence type="ECO:0000256" key="1">
    <source>
        <dbReference type="SAM" id="MobiDB-lite"/>
    </source>
</evidence>
<evidence type="ECO:0000305" key="2"/>
<dbReference type="EMBL" id="AAFI02000005">
    <property type="protein sequence ID" value="EAL72258.1"/>
    <property type="molecule type" value="Genomic_DNA"/>
</dbReference>
<dbReference type="RefSeq" id="XP_646315.1">
    <property type="nucleotide sequence ID" value="XM_641223.1"/>
</dbReference>
<dbReference type="SMR" id="Q55D16"/>
<dbReference type="FunCoup" id="Q55D16">
    <property type="interactions" value="725"/>
</dbReference>
<dbReference type="STRING" id="44689.Q55D16"/>
<dbReference type="PaxDb" id="44689-DDB0233034"/>
<dbReference type="EnsemblProtists" id="EAL72258">
    <property type="protein sequence ID" value="EAL72258"/>
    <property type="gene ID" value="DDB_G0269816"/>
</dbReference>
<dbReference type="GeneID" id="8617270"/>
<dbReference type="KEGG" id="ddi:DDB_G0269816"/>
<dbReference type="dictyBase" id="DDB_G0269816"/>
<dbReference type="VEuPathDB" id="AmoebaDB:DDB_G0269816"/>
<dbReference type="eggNOG" id="KOG2837">
    <property type="taxonomic scope" value="Eukaryota"/>
</dbReference>
<dbReference type="HOGENOM" id="CLU_030065_1_0_1"/>
<dbReference type="InParanoid" id="Q55D16"/>
<dbReference type="OMA" id="RMTDFIE"/>
<dbReference type="PhylomeDB" id="Q55D16"/>
<dbReference type="PRO" id="PR:Q55D16"/>
<dbReference type="Proteomes" id="UP000002195">
    <property type="component" value="Chromosome 1"/>
</dbReference>
<dbReference type="GO" id="GO:0005634">
    <property type="term" value="C:nucleus"/>
    <property type="evidence" value="ECO:0000250"/>
    <property type="project" value="dictyBase"/>
</dbReference>
<dbReference type="GO" id="GO:0003690">
    <property type="term" value="F:double-stranded DNA binding"/>
    <property type="evidence" value="ECO:0000318"/>
    <property type="project" value="GO_Central"/>
</dbReference>
<dbReference type="GO" id="GO:0003723">
    <property type="term" value="F:RNA binding"/>
    <property type="evidence" value="ECO:0000250"/>
    <property type="project" value="dictyBase"/>
</dbReference>
<dbReference type="GO" id="GO:0008270">
    <property type="term" value="F:zinc ion binding"/>
    <property type="evidence" value="ECO:0007669"/>
    <property type="project" value="UniProtKB-KW"/>
</dbReference>
<dbReference type="GO" id="GO:0006974">
    <property type="term" value="P:DNA damage response"/>
    <property type="evidence" value="ECO:0000318"/>
    <property type="project" value="GO_Central"/>
</dbReference>
<dbReference type="GO" id="GO:0006260">
    <property type="term" value="P:DNA replication"/>
    <property type="evidence" value="ECO:0000250"/>
    <property type="project" value="dictyBase"/>
</dbReference>
<dbReference type="FunFam" id="2.30.30.140:FF:000092">
    <property type="entry name" value="DNA/RNA-binding protein KIN17"/>
    <property type="match status" value="1"/>
</dbReference>
<dbReference type="FunFam" id="1.10.10.2030:FF:000001">
    <property type="entry name" value="DNA/RNA-binding protein KIN17, putative"/>
    <property type="match status" value="1"/>
</dbReference>
<dbReference type="FunFam" id="2.30.30.30:FF:000021">
    <property type="entry name" value="DNA/RNA-binding protein KIN17, putative"/>
    <property type="match status" value="1"/>
</dbReference>
<dbReference type="Gene3D" id="2.30.30.140">
    <property type="match status" value="1"/>
</dbReference>
<dbReference type="Gene3D" id="2.30.30.30">
    <property type="match status" value="1"/>
</dbReference>
<dbReference type="Gene3D" id="1.10.10.2030">
    <property type="entry name" value="DNA/RNA-binding protein Kin17, conserved domain"/>
    <property type="match status" value="1"/>
</dbReference>
<dbReference type="InterPro" id="IPR056767">
    <property type="entry name" value="C2H2-Znf_KIN17"/>
</dbReference>
<dbReference type="InterPro" id="IPR019447">
    <property type="entry name" value="DNA/RNA-bd_Kin17_WH-like_dom"/>
</dbReference>
<dbReference type="InterPro" id="IPR037321">
    <property type="entry name" value="KIN17-like"/>
</dbReference>
<dbReference type="InterPro" id="IPR038254">
    <property type="entry name" value="KIN17_WH-like_sf"/>
</dbReference>
<dbReference type="InterPro" id="IPR041330">
    <property type="entry name" value="KN17_SH3"/>
</dbReference>
<dbReference type="InterPro" id="IPR041995">
    <property type="entry name" value="KOW_KIN17"/>
</dbReference>
<dbReference type="InterPro" id="IPR014722">
    <property type="entry name" value="Rib_uL2_dom2"/>
</dbReference>
<dbReference type="InterPro" id="IPR036236">
    <property type="entry name" value="Znf_C2H2_sf"/>
</dbReference>
<dbReference type="InterPro" id="IPR013087">
    <property type="entry name" value="Znf_C2H2_type"/>
</dbReference>
<dbReference type="PANTHER" id="PTHR12805:SF0">
    <property type="entry name" value="DNA_RNA-BINDING PROTEIN KIN17"/>
    <property type="match status" value="1"/>
</dbReference>
<dbReference type="PANTHER" id="PTHR12805">
    <property type="entry name" value="KIN17 KIN, ANTIGENIC DETERMINANT OF RECA PROTEIN HOMOLOG"/>
    <property type="match status" value="1"/>
</dbReference>
<dbReference type="Pfam" id="PF25095">
    <property type="entry name" value="C2H2-zf_KIN17"/>
    <property type="match status" value="1"/>
</dbReference>
<dbReference type="Pfam" id="PF18131">
    <property type="entry name" value="KN17_SH3"/>
    <property type="match status" value="1"/>
</dbReference>
<dbReference type="Pfam" id="PF25092">
    <property type="entry name" value="SH3_KIN17_C"/>
    <property type="match status" value="1"/>
</dbReference>
<dbReference type="Pfam" id="PF10357">
    <property type="entry name" value="WH_KIN17"/>
    <property type="match status" value="1"/>
</dbReference>
<dbReference type="SMART" id="SM01253">
    <property type="entry name" value="Kin17_mid"/>
    <property type="match status" value="1"/>
</dbReference>
<dbReference type="SUPFAM" id="SSF57667">
    <property type="entry name" value="beta-beta-alpha zinc fingers"/>
    <property type="match status" value="1"/>
</dbReference>
<dbReference type="SUPFAM" id="SSF81995">
    <property type="entry name" value="beta-sandwich domain of Sec23/24"/>
    <property type="match status" value="1"/>
</dbReference>
<dbReference type="PROSITE" id="PS00028">
    <property type="entry name" value="ZINC_FINGER_C2H2_1"/>
    <property type="match status" value="1"/>
</dbReference>
<sequence>MGKGDALTPKQIANKIKAKGLQRLRWYCQLCEKQCRDENGFKCHISSESHMRQMEVFSNKSSFIVSQYSKEFEEDFLRIMSRQFINSRVPANQVYAEYIKDRHHIHMNATEWTSLTEFVKYLGKTSKCEVEETPKGWFIRYINRDPEYVMRKVSEEKKEKAELNEEERQRLQIEKQIKELNKNKIEQDEIKPTELSKEDLEKMSLLELNIKSTTNTTTTTTNTTTTTTNKNIFDKLKTNDNNSSNNNYNDQTNPKPYAKKMSAIEEIMFKEKEKERQQKEKLEFEKQQQQQQQQQQQQQQQQQQQQQQQQQQQQQQQQQQQQLNSNNNNNEEKPWIIKDIVIKIIDKELANGKYFKQKGYIVSVENEFLAKVKLLDSGDILKIDQTFLETVIPQIGSTVIIVNGKYRGKEATIKNVNFDDFNAKLYIKDNDITITLPYESFSKQY</sequence>
<organism>
    <name type="scientific">Dictyostelium discoideum</name>
    <name type="common">Social amoeba</name>
    <dbReference type="NCBI Taxonomy" id="44689"/>
    <lineage>
        <taxon>Eukaryota</taxon>
        <taxon>Amoebozoa</taxon>
        <taxon>Evosea</taxon>
        <taxon>Eumycetozoa</taxon>
        <taxon>Dictyostelia</taxon>
        <taxon>Dictyosteliales</taxon>
        <taxon>Dictyosteliaceae</taxon>
        <taxon>Dictyostelium</taxon>
    </lineage>
</organism>
<protein>
    <recommendedName>
        <fullName>KIN17-like protein</fullName>
    </recommendedName>
</protein>
<accession>Q55D16</accession>
<feature type="chain" id="PRO_0000351448" description="KIN17-like protein">
    <location>
        <begin position="1"/>
        <end position="445"/>
    </location>
</feature>
<feature type="zinc finger region" description="C2H2-type">
    <location>
        <begin position="26"/>
        <end position="50"/>
    </location>
</feature>
<feature type="region of interest" description="Disordered" evidence="1">
    <location>
        <begin position="215"/>
        <end position="256"/>
    </location>
</feature>
<feature type="compositionally biased region" description="Low complexity" evidence="1">
    <location>
        <begin position="215"/>
        <end position="229"/>
    </location>
</feature>
<feature type="compositionally biased region" description="Low complexity" evidence="1">
    <location>
        <begin position="239"/>
        <end position="253"/>
    </location>
</feature>
<comment type="similarity">
    <text evidence="2">Belongs to the KIN17 family.</text>
</comment>
<proteinExistence type="inferred from homology"/>
<reference key="1">
    <citation type="journal article" date="2005" name="Nature">
        <title>The genome of the social amoeba Dictyostelium discoideum.</title>
        <authorList>
            <person name="Eichinger L."/>
            <person name="Pachebat J.A."/>
            <person name="Gloeckner G."/>
            <person name="Rajandream M.A."/>
            <person name="Sucgang R."/>
            <person name="Berriman M."/>
            <person name="Song J."/>
            <person name="Olsen R."/>
            <person name="Szafranski K."/>
            <person name="Xu Q."/>
            <person name="Tunggal B."/>
            <person name="Kummerfeld S."/>
            <person name="Madera M."/>
            <person name="Konfortov B.A."/>
            <person name="Rivero F."/>
            <person name="Bankier A.T."/>
            <person name="Lehmann R."/>
            <person name="Hamlin N."/>
            <person name="Davies R."/>
            <person name="Gaudet P."/>
            <person name="Fey P."/>
            <person name="Pilcher K."/>
            <person name="Chen G."/>
            <person name="Saunders D."/>
            <person name="Sodergren E.J."/>
            <person name="Davis P."/>
            <person name="Kerhornou A."/>
            <person name="Nie X."/>
            <person name="Hall N."/>
            <person name="Anjard C."/>
            <person name="Hemphill L."/>
            <person name="Bason N."/>
            <person name="Farbrother P."/>
            <person name="Desany B."/>
            <person name="Just E."/>
            <person name="Morio T."/>
            <person name="Rost R."/>
            <person name="Churcher C.M."/>
            <person name="Cooper J."/>
            <person name="Haydock S."/>
            <person name="van Driessche N."/>
            <person name="Cronin A."/>
            <person name="Goodhead I."/>
            <person name="Muzny D.M."/>
            <person name="Mourier T."/>
            <person name="Pain A."/>
            <person name="Lu M."/>
            <person name="Harper D."/>
            <person name="Lindsay R."/>
            <person name="Hauser H."/>
            <person name="James K.D."/>
            <person name="Quiles M."/>
            <person name="Madan Babu M."/>
            <person name="Saito T."/>
            <person name="Buchrieser C."/>
            <person name="Wardroper A."/>
            <person name="Felder M."/>
            <person name="Thangavelu M."/>
            <person name="Johnson D."/>
            <person name="Knights A."/>
            <person name="Loulseged H."/>
            <person name="Mungall K.L."/>
            <person name="Oliver K."/>
            <person name="Price C."/>
            <person name="Quail M.A."/>
            <person name="Urushihara H."/>
            <person name="Hernandez J."/>
            <person name="Rabbinowitsch E."/>
            <person name="Steffen D."/>
            <person name="Sanders M."/>
            <person name="Ma J."/>
            <person name="Kohara Y."/>
            <person name="Sharp S."/>
            <person name="Simmonds M.N."/>
            <person name="Spiegler S."/>
            <person name="Tivey A."/>
            <person name="Sugano S."/>
            <person name="White B."/>
            <person name="Walker D."/>
            <person name="Woodward J.R."/>
            <person name="Winckler T."/>
            <person name="Tanaka Y."/>
            <person name="Shaulsky G."/>
            <person name="Schleicher M."/>
            <person name="Weinstock G.M."/>
            <person name="Rosenthal A."/>
            <person name="Cox E.C."/>
            <person name="Chisholm R.L."/>
            <person name="Gibbs R.A."/>
            <person name="Loomis W.F."/>
            <person name="Platzer M."/>
            <person name="Kay R.R."/>
            <person name="Williams J.G."/>
            <person name="Dear P.H."/>
            <person name="Noegel A.A."/>
            <person name="Barrell B.G."/>
            <person name="Kuspa A."/>
        </authorList>
    </citation>
    <scope>NUCLEOTIDE SEQUENCE [LARGE SCALE GENOMIC DNA]</scope>
    <source>
        <strain>AX4</strain>
    </source>
</reference>
<gene>
    <name type="ORF">DDB_G0269816</name>
</gene>
<keyword id="KW-0479">Metal-binding</keyword>
<keyword id="KW-1185">Reference proteome</keyword>
<keyword id="KW-0862">Zinc</keyword>
<keyword id="KW-0863">Zinc-finger</keyword>
<name>KIN17_DICDI</name>